<organism>
    <name type="scientific">Acaryochloris marina (strain MBIC 11017)</name>
    <dbReference type="NCBI Taxonomy" id="329726"/>
    <lineage>
        <taxon>Bacteria</taxon>
        <taxon>Bacillati</taxon>
        <taxon>Cyanobacteriota</taxon>
        <taxon>Cyanophyceae</taxon>
        <taxon>Acaryochloridales</taxon>
        <taxon>Acaryochloridaceae</taxon>
        <taxon>Acaryochloris</taxon>
    </lineage>
</organism>
<reference key="1">
    <citation type="journal article" date="2008" name="Proc. Natl. Acad. Sci. U.S.A.">
        <title>Niche adaptation and genome expansion in the chlorophyll d-producing cyanobacterium Acaryochloris marina.</title>
        <authorList>
            <person name="Swingley W.D."/>
            <person name="Chen M."/>
            <person name="Cheung P.C."/>
            <person name="Conrad A.L."/>
            <person name="Dejesa L.C."/>
            <person name="Hao J."/>
            <person name="Honchak B.M."/>
            <person name="Karbach L.E."/>
            <person name="Kurdoglu A."/>
            <person name="Lahiri S."/>
            <person name="Mastrian S.D."/>
            <person name="Miyashita H."/>
            <person name="Page L."/>
            <person name="Ramakrishna P."/>
            <person name="Satoh S."/>
            <person name="Sattley W.M."/>
            <person name="Shimada Y."/>
            <person name="Taylor H.L."/>
            <person name="Tomo T."/>
            <person name="Tsuchiya T."/>
            <person name="Wang Z.T."/>
            <person name="Raymond J."/>
            <person name="Mimuro M."/>
            <person name="Blankenship R.E."/>
            <person name="Touchman J.W."/>
        </authorList>
    </citation>
    <scope>NUCLEOTIDE SEQUENCE [LARGE SCALE GENOMIC DNA]</scope>
    <source>
        <strain>MBIC 11017</strain>
    </source>
</reference>
<feature type="chain" id="PRO_1000075041" description="4-diphosphocytidyl-2-C-methyl-D-erythritol kinase">
    <location>
        <begin position="1"/>
        <end position="310"/>
    </location>
</feature>
<feature type="active site" evidence="1">
    <location>
        <position position="11"/>
    </location>
</feature>
<feature type="active site" evidence="1">
    <location>
        <position position="137"/>
    </location>
</feature>
<feature type="binding site" evidence="1">
    <location>
        <begin position="95"/>
        <end position="105"/>
    </location>
    <ligand>
        <name>ATP</name>
        <dbReference type="ChEBI" id="CHEBI:30616"/>
    </ligand>
</feature>
<protein>
    <recommendedName>
        <fullName evidence="1">4-diphosphocytidyl-2-C-methyl-D-erythritol kinase</fullName>
        <shortName evidence="1">CMK</shortName>
        <ecNumber evidence="1">2.7.1.148</ecNumber>
    </recommendedName>
    <alternativeName>
        <fullName evidence="1">4-(cytidine-5'-diphospho)-2-C-methyl-D-erythritol kinase</fullName>
    </alternativeName>
</protein>
<keyword id="KW-0067">ATP-binding</keyword>
<keyword id="KW-0414">Isoprene biosynthesis</keyword>
<keyword id="KW-0418">Kinase</keyword>
<keyword id="KW-0547">Nucleotide-binding</keyword>
<keyword id="KW-1185">Reference proteome</keyword>
<keyword id="KW-0808">Transferase</keyword>
<comment type="function">
    <text evidence="1">Catalyzes the phosphorylation of the position 2 hydroxy group of 4-diphosphocytidyl-2C-methyl-D-erythritol.</text>
</comment>
<comment type="catalytic activity">
    <reaction evidence="1">
        <text>4-CDP-2-C-methyl-D-erythritol + ATP = 4-CDP-2-C-methyl-D-erythritol 2-phosphate + ADP + H(+)</text>
        <dbReference type="Rhea" id="RHEA:18437"/>
        <dbReference type="ChEBI" id="CHEBI:15378"/>
        <dbReference type="ChEBI" id="CHEBI:30616"/>
        <dbReference type="ChEBI" id="CHEBI:57823"/>
        <dbReference type="ChEBI" id="CHEBI:57919"/>
        <dbReference type="ChEBI" id="CHEBI:456216"/>
        <dbReference type="EC" id="2.7.1.148"/>
    </reaction>
</comment>
<comment type="pathway">
    <text evidence="1">Isoprenoid biosynthesis; isopentenyl diphosphate biosynthesis via DXP pathway; isopentenyl diphosphate from 1-deoxy-D-xylulose 5-phosphate: step 3/6.</text>
</comment>
<comment type="similarity">
    <text evidence="1">Belongs to the GHMP kinase family. IspE subfamily.</text>
</comment>
<proteinExistence type="inferred from homology"/>
<evidence type="ECO:0000255" key="1">
    <source>
        <dbReference type="HAMAP-Rule" id="MF_00061"/>
    </source>
</evidence>
<name>ISPE_ACAM1</name>
<dbReference type="EC" id="2.7.1.148" evidence="1"/>
<dbReference type="EMBL" id="CP000828">
    <property type="protein sequence ID" value="ABW26773.1"/>
    <property type="molecule type" value="Genomic_DNA"/>
</dbReference>
<dbReference type="RefSeq" id="WP_012162288.1">
    <property type="nucleotide sequence ID" value="NC_009925.1"/>
</dbReference>
<dbReference type="SMR" id="B0CC88"/>
<dbReference type="STRING" id="329726.AM1_1752"/>
<dbReference type="KEGG" id="amr:AM1_1752"/>
<dbReference type="eggNOG" id="COG1947">
    <property type="taxonomic scope" value="Bacteria"/>
</dbReference>
<dbReference type="HOGENOM" id="CLU_053057_1_1_3"/>
<dbReference type="OrthoDB" id="9809438at2"/>
<dbReference type="UniPathway" id="UPA00056">
    <property type="reaction ID" value="UER00094"/>
</dbReference>
<dbReference type="Proteomes" id="UP000000268">
    <property type="component" value="Chromosome"/>
</dbReference>
<dbReference type="GO" id="GO:0050515">
    <property type="term" value="F:4-(cytidine 5'-diphospho)-2-C-methyl-D-erythritol kinase activity"/>
    <property type="evidence" value="ECO:0007669"/>
    <property type="project" value="UniProtKB-UniRule"/>
</dbReference>
<dbReference type="GO" id="GO:0005524">
    <property type="term" value="F:ATP binding"/>
    <property type="evidence" value="ECO:0007669"/>
    <property type="project" value="UniProtKB-UniRule"/>
</dbReference>
<dbReference type="GO" id="GO:0019288">
    <property type="term" value="P:isopentenyl diphosphate biosynthetic process, methylerythritol 4-phosphate pathway"/>
    <property type="evidence" value="ECO:0007669"/>
    <property type="project" value="UniProtKB-UniRule"/>
</dbReference>
<dbReference type="GO" id="GO:0016114">
    <property type="term" value="P:terpenoid biosynthetic process"/>
    <property type="evidence" value="ECO:0007669"/>
    <property type="project" value="InterPro"/>
</dbReference>
<dbReference type="Gene3D" id="3.30.230.10">
    <property type="match status" value="1"/>
</dbReference>
<dbReference type="Gene3D" id="3.30.70.890">
    <property type="entry name" value="GHMP kinase, C-terminal domain"/>
    <property type="match status" value="1"/>
</dbReference>
<dbReference type="HAMAP" id="MF_00061">
    <property type="entry name" value="IspE"/>
    <property type="match status" value="1"/>
</dbReference>
<dbReference type="InterPro" id="IPR013750">
    <property type="entry name" value="GHMP_kinase_C_dom"/>
</dbReference>
<dbReference type="InterPro" id="IPR036554">
    <property type="entry name" value="GHMP_kinase_C_sf"/>
</dbReference>
<dbReference type="InterPro" id="IPR006204">
    <property type="entry name" value="GHMP_kinase_N_dom"/>
</dbReference>
<dbReference type="InterPro" id="IPR004424">
    <property type="entry name" value="IspE"/>
</dbReference>
<dbReference type="InterPro" id="IPR020568">
    <property type="entry name" value="Ribosomal_Su5_D2-typ_SF"/>
</dbReference>
<dbReference type="InterPro" id="IPR014721">
    <property type="entry name" value="Ribsml_uS5_D2-typ_fold_subgr"/>
</dbReference>
<dbReference type="NCBIfam" id="TIGR00154">
    <property type="entry name" value="ispE"/>
    <property type="match status" value="1"/>
</dbReference>
<dbReference type="PANTHER" id="PTHR43527">
    <property type="entry name" value="4-DIPHOSPHOCYTIDYL-2-C-METHYL-D-ERYTHRITOL KINASE, CHLOROPLASTIC"/>
    <property type="match status" value="1"/>
</dbReference>
<dbReference type="PANTHER" id="PTHR43527:SF2">
    <property type="entry name" value="4-DIPHOSPHOCYTIDYL-2-C-METHYL-D-ERYTHRITOL KINASE, CHLOROPLASTIC"/>
    <property type="match status" value="1"/>
</dbReference>
<dbReference type="Pfam" id="PF08544">
    <property type="entry name" value="GHMP_kinases_C"/>
    <property type="match status" value="1"/>
</dbReference>
<dbReference type="Pfam" id="PF00288">
    <property type="entry name" value="GHMP_kinases_N"/>
    <property type="match status" value="1"/>
</dbReference>
<dbReference type="PIRSF" id="PIRSF010376">
    <property type="entry name" value="IspE"/>
    <property type="match status" value="1"/>
</dbReference>
<dbReference type="SUPFAM" id="SSF55060">
    <property type="entry name" value="GHMP Kinase, C-terminal domain"/>
    <property type="match status" value="1"/>
</dbReference>
<dbReference type="SUPFAM" id="SSF54211">
    <property type="entry name" value="Ribosomal protein S5 domain 2-like"/>
    <property type="match status" value="1"/>
</dbReference>
<sequence>MHAYTLKAPAKINLLLEIIGDRPDGFHELVMVMQSVNLADIVELQPLSGDRIELFCNHPQVPCDQSNLAHRAARLMQEQFPGKGGVAITIDKKIPIGAGLAGGSADAAAVLVGLDLMWGLGLTQAELHTYAAKLGSDIPFCVSGGTALALGRGEELTPLPDLDQLYAVLAKYRSLSVATPWAYKTYRQQFSESYARDPEALEKRRREGHSVELLAAISHRDSQKVPQYLYNDLEKVVLPEHPQVQEIRDLFQSFGALGTMMSGSGPTVFGLADSRSKAELMATQLQTALPDPDLEILVTKFCSSGIQLLS</sequence>
<gene>
    <name evidence="1" type="primary">ispE</name>
    <name type="ordered locus">AM1_1752</name>
</gene>
<accession>B0CC88</accession>